<sequence length="375" mass="41765">MLLPPHPGRTLPAYHGDNRFLLGACFLSKLPMLRPMKLSLVCSANPNNHRSRSSDITRHQKGGSARRKSKPYQEKDDSENIDEFDTDIMSSKNGPPISLTSNSRPQATSVPGEREKEIVELFKRVQAQLRARGKGKEEKKPEQAKAQGERGSVDSLLNLLRKHSVDQRRKSGDEKEQSVDQTKRSNESGNKQNSSIFIKNDTQEEQKKPHPAAFKRPASNFRRRSPVPNVKFQPVTNVDAERVINNINDAVQEAKPTLENKAATDEPDSVSTFEPNSVIEPENLSLDDLDHISDDEPDASDTDEPSGEYDEPSLQIPSVPIIDESHDTTLKSSLGGPDLSTLKVTELRELAKSRGIKGYSKMKKNDLVELLSNMA</sequence>
<accession>Q8L4E7</accession>
<accession>Q8RYA0</accession>
<accession>Q94HF4</accession>
<organism>
    <name type="scientific">Oryza sativa subsp. japonica</name>
    <name type="common">Rice</name>
    <dbReference type="NCBI Taxonomy" id="39947"/>
    <lineage>
        <taxon>Eukaryota</taxon>
        <taxon>Viridiplantae</taxon>
        <taxon>Streptophyta</taxon>
        <taxon>Embryophyta</taxon>
        <taxon>Tracheophyta</taxon>
        <taxon>Spermatophyta</taxon>
        <taxon>Magnoliopsida</taxon>
        <taxon>Liliopsida</taxon>
        <taxon>Poales</taxon>
        <taxon>Poaceae</taxon>
        <taxon>BOP clade</taxon>
        <taxon>Oryzoideae</taxon>
        <taxon>Oryzeae</taxon>
        <taxon>Oryzinae</taxon>
        <taxon>Oryza</taxon>
        <taxon>Oryza sativa</taxon>
    </lineage>
</organism>
<dbReference type="EMBL" id="AJ315790">
    <property type="protein sequence ID" value="CAC86222.1"/>
    <property type="molecule type" value="Genomic_DNA"/>
</dbReference>
<dbReference type="EMBL" id="AJ315791">
    <property type="protein sequence ID" value="CAC86223.1"/>
    <property type="molecule type" value="mRNA"/>
</dbReference>
<dbReference type="EMBL" id="AC079633">
    <property type="protein sequence ID" value="AAK92634.1"/>
    <property type="status" value="ALT_SEQ"/>
    <property type="molecule type" value="Genomic_DNA"/>
</dbReference>
<dbReference type="EMBL" id="AP014959">
    <property type="protein sequence ID" value="BAS82645.1"/>
    <property type="molecule type" value="Genomic_DNA"/>
</dbReference>
<dbReference type="EMBL" id="AY072715">
    <property type="protein sequence ID" value="AAL86018.1"/>
    <property type="molecule type" value="mRNA"/>
</dbReference>
<dbReference type="RefSeq" id="XP_015630580.1">
    <property type="nucleotide sequence ID" value="XM_015775094.1"/>
</dbReference>
<dbReference type="RefSeq" id="XP_015630581.1">
    <property type="nucleotide sequence ID" value="XM_015775095.1"/>
</dbReference>
<dbReference type="RefSeq" id="XP_015630582.1">
    <property type="nucleotide sequence ID" value="XM_015775096.1"/>
</dbReference>
<dbReference type="RefSeq" id="XP_015630583.1">
    <property type="nucleotide sequence ID" value="XM_015775097.1"/>
</dbReference>
<dbReference type="RefSeq" id="XP_015630584.1">
    <property type="nucleotide sequence ID" value="XM_015775098.1"/>
</dbReference>
<dbReference type="SMR" id="Q8L4E7"/>
<dbReference type="FunCoup" id="Q8L4E7">
    <property type="interactions" value="1563"/>
</dbReference>
<dbReference type="STRING" id="39947.Q8L4E7"/>
<dbReference type="PaxDb" id="39947-Q8L4E7"/>
<dbReference type="EnsemblPlants" id="Os03t0183100-01">
    <property type="protein sequence ID" value="Os03t0183100-01"/>
    <property type="gene ID" value="Os03g0183100"/>
</dbReference>
<dbReference type="EnsemblPlants" id="Os03t0183100-02">
    <property type="protein sequence ID" value="Os03t0183100-02"/>
    <property type="gene ID" value="Os03g0183100"/>
</dbReference>
<dbReference type="Gramene" id="Os03t0183100-01">
    <property type="protein sequence ID" value="Os03t0183100-01"/>
    <property type="gene ID" value="Os03g0183100"/>
</dbReference>
<dbReference type="Gramene" id="Os03t0183100-02">
    <property type="protein sequence ID" value="Os03t0183100-02"/>
    <property type="gene ID" value="Os03g0183100"/>
</dbReference>
<dbReference type="eggNOG" id="ENOG502QQ4E">
    <property type="taxonomic scope" value="Eukaryota"/>
</dbReference>
<dbReference type="HOGENOM" id="CLU_062947_0_0_1"/>
<dbReference type="InParanoid" id="Q8L4E7"/>
<dbReference type="OMA" id="FNYVSGY"/>
<dbReference type="OrthoDB" id="652255at2759"/>
<dbReference type="Proteomes" id="UP000000763">
    <property type="component" value="Chromosome 3"/>
</dbReference>
<dbReference type="Proteomes" id="UP000059680">
    <property type="component" value="Chromosome 3"/>
</dbReference>
<dbReference type="ExpressionAtlas" id="Q8L4E7">
    <property type="expression patterns" value="baseline and differential"/>
</dbReference>
<dbReference type="GO" id="GO:0003677">
    <property type="term" value="F:DNA binding"/>
    <property type="evidence" value="ECO:0007669"/>
    <property type="project" value="UniProtKB-KW"/>
</dbReference>
<dbReference type="GO" id="GO:0006353">
    <property type="term" value="P:DNA-templated transcription termination"/>
    <property type="evidence" value="ECO:0007669"/>
    <property type="project" value="InterPro"/>
</dbReference>
<dbReference type="Gene3D" id="1.10.720.10">
    <property type="match status" value="1"/>
</dbReference>
<dbReference type="InterPro" id="IPR011112">
    <property type="entry name" value="Rho-like_N"/>
</dbReference>
<dbReference type="InterPro" id="IPR036269">
    <property type="entry name" value="Rho_N_sf"/>
</dbReference>
<dbReference type="PANTHER" id="PTHR34449:SF5">
    <property type="entry name" value="ATP BINDING _ ATPASE"/>
    <property type="match status" value="1"/>
</dbReference>
<dbReference type="PANTHER" id="PTHR34449">
    <property type="entry name" value="RHO TERMINATION FACTOR"/>
    <property type="match status" value="1"/>
</dbReference>
<dbReference type="Pfam" id="PF07498">
    <property type="entry name" value="Rho_N"/>
    <property type="match status" value="1"/>
</dbReference>
<dbReference type="SMART" id="SM00959">
    <property type="entry name" value="Rho_N"/>
    <property type="match status" value="1"/>
</dbReference>
<dbReference type="SUPFAM" id="SSF68912">
    <property type="entry name" value="Rho N-terminal domain-like"/>
    <property type="match status" value="1"/>
</dbReference>
<name>BP73_ORYSJ</name>
<comment type="function">
    <text evidence="2">May regulate cell proliferation and plant growth.</text>
</comment>
<comment type="subunit">
    <text evidence="2">Binds to the DNA in the promoter region of WAXY containing the sequence 5'-ACGCACGCTAACGTGA-3'.</text>
</comment>
<comment type="tissue specificity">
    <text evidence="2">Expressed in tissues with high cell division activities: in root tips, stem node, panicle, flower and immature seed. Weakly expressed in root and leaf.</text>
</comment>
<comment type="developmental stage">
    <text evidence="2">Expressed in developing panicle, and in developing seed up to 15 days after flowering. Expression is reduced in the late stages of seed development.</text>
</comment>
<comment type="sequence caution" evidence="3">
    <conflict type="erroneous gene model prediction">
        <sequence resource="EMBL-CDS" id="AAK92634"/>
    </conflict>
</comment>
<keyword id="KW-0238">DNA-binding</keyword>
<keyword id="KW-0341">Growth regulation</keyword>
<keyword id="KW-1185">Reference proteome</keyword>
<gene>
    <name type="primary">BP-73</name>
    <name type="ordered locus">Os03g0183100</name>
    <name type="ordered locus">LOC_Os03g08480</name>
    <name type="ORF">OSJNBa0032G08.14</name>
</gene>
<protein>
    <recommendedName>
        <fullName>SAP-like protein BP-73</fullName>
    </recommendedName>
    <alternativeName>
        <fullName>OsBP-73</fullName>
    </alternativeName>
    <alternativeName>
        <fullName>Riaa1</fullName>
    </alternativeName>
</protein>
<proteinExistence type="evidence at protein level"/>
<evidence type="ECO:0000256" key="1">
    <source>
        <dbReference type="SAM" id="MobiDB-lite"/>
    </source>
</evidence>
<evidence type="ECO:0000269" key="2">
    <source>
    </source>
</evidence>
<evidence type="ECO:0000305" key="3"/>
<reference key="1">
    <citation type="journal article" date="2003" name="Plant Mol. Biol.">
        <title>OsBP-73, a rice gene, encodes a novel DNA-binding protein with a SAP-like domain and its genetics interference by double-stranded RNA inhibits rice growth.</title>
        <authorList>
            <person name="Chen J."/>
            <person name="Tang W.-H."/>
            <person name="Hong M.-M."/>
            <person name="Wang Z.-Y."/>
        </authorList>
    </citation>
    <scope>NUCLEOTIDE SEQUENCE [GENOMIC DNA / MRNA]</scope>
    <scope>FUNCTION</scope>
    <scope>SUBUNIT</scope>
    <scope>TISSUE SPECIFICITY</scope>
    <scope>DEVELOPMENTAL STAGE</scope>
    <source>
        <strain>cv. Hanfeng</strain>
        <strain>cv. Zhonghua 11</strain>
        <tissue>Immature seed</tissue>
    </source>
</reference>
<reference key="2">
    <citation type="journal article" date="2005" name="Genome Res.">
        <title>Sequence, annotation, and analysis of synteny between rice chromosome 3 and diverged grass species.</title>
        <authorList>
            <consortium name="The rice chromosome 3 sequencing consortium"/>
            <person name="Buell C.R."/>
            <person name="Yuan Q."/>
            <person name="Ouyang S."/>
            <person name="Liu J."/>
            <person name="Zhu W."/>
            <person name="Wang A."/>
            <person name="Maiti R."/>
            <person name="Haas B."/>
            <person name="Wortman J."/>
            <person name="Pertea M."/>
            <person name="Jones K.M."/>
            <person name="Kim M."/>
            <person name="Overton L."/>
            <person name="Tsitrin T."/>
            <person name="Fadrosh D."/>
            <person name="Bera J."/>
            <person name="Weaver B."/>
            <person name="Jin S."/>
            <person name="Johri S."/>
            <person name="Reardon M."/>
            <person name="Webb K."/>
            <person name="Hill J."/>
            <person name="Moffat K."/>
            <person name="Tallon L."/>
            <person name="Van Aken S."/>
            <person name="Lewis M."/>
            <person name="Utterback T."/>
            <person name="Feldblyum T."/>
            <person name="Zismann V."/>
            <person name="Iobst S."/>
            <person name="Hsiao J."/>
            <person name="de Vazeille A.R."/>
            <person name="Salzberg S.L."/>
            <person name="White O."/>
            <person name="Fraser C.M."/>
            <person name="Yu Y."/>
            <person name="Kim H."/>
            <person name="Rambo T."/>
            <person name="Currie J."/>
            <person name="Collura K."/>
            <person name="Kernodle-Thompson S."/>
            <person name="Wei F."/>
            <person name="Kudrna K."/>
            <person name="Ammiraju J.S.S."/>
            <person name="Luo M."/>
            <person name="Goicoechea J.L."/>
            <person name="Wing R.A."/>
            <person name="Henry D."/>
            <person name="Oates R."/>
            <person name="Palmer M."/>
            <person name="Pries G."/>
            <person name="Saski C."/>
            <person name="Simmons J."/>
            <person name="Soderlund C."/>
            <person name="Nelson W."/>
            <person name="de la Bastide M."/>
            <person name="Spiegel L."/>
            <person name="Nascimento L."/>
            <person name="Huang E."/>
            <person name="Preston R."/>
            <person name="Zutavern T."/>
            <person name="Palmer L."/>
            <person name="O'Shaughnessy A."/>
            <person name="Dike S."/>
            <person name="McCombie W.R."/>
            <person name="Minx P."/>
            <person name="Cordum H."/>
            <person name="Wilson R."/>
            <person name="Jin W."/>
            <person name="Lee H.R."/>
            <person name="Jiang J."/>
            <person name="Jackson S."/>
        </authorList>
    </citation>
    <scope>NUCLEOTIDE SEQUENCE [LARGE SCALE GENOMIC DNA]</scope>
    <source>
        <strain>cv. Nipponbare</strain>
    </source>
</reference>
<reference key="3">
    <citation type="journal article" date="2005" name="Nature">
        <title>The map-based sequence of the rice genome.</title>
        <authorList>
            <consortium name="International rice genome sequencing project (IRGSP)"/>
        </authorList>
    </citation>
    <scope>NUCLEOTIDE SEQUENCE [LARGE SCALE GENOMIC DNA]</scope>
    <source>
        <strain>cv. Nipponbare</strain>
    </source>
</reference>
<reference key="4">
    <citation type="journal article" date="2013" name="Rice">
        <title>Improvement of the Oryza sativa Nipponbare reference genome using next generation sequence and optical map data.</title>
        <authorList>
            <person name="Kawahara Y."/>
            <person name="de la Bastide M."/>
            <person name="Hamilton J.P."/>
            <person name="Kanamori H."/>
            <person name="McCombie W.R."/>
            <person name="Ouyang S."/>
            <person name="Schwartz D.C."/>
            <person name="Tanaka T."/>
            <person name="Wu J."/>
            <person name="Zhou S."/>
            <person name="Childs K.L."/>
            <person name="Davidson R.M."/>
            <person name="Lin H."/>
            <person name="Quesada-Ocampo L."/>
            <person name="Vaillancourt B."/>
            <person name="Sakai H."/>
            <person name="Lee S.S."/>
            <person name="Kim J."/>
            <person name="Numa H."/>
            <person name="Itoh T."/>
            <person name="Buell C.R."/>
            <person name="Matsumoto T."/>
        </authorList>
    </citation>
    <scope>GENOME REANNOTATION</scope>
    <source>
        <strain>cv. Nipponbare</strain>
    </source>
</reference>
<reference key="5">
    <citation type="submission" date="2002-01" db="EMBL/GenBank/DDBJ databases">
        <authorList>
            <person name="Peng R."/>
            <person name="Yao Q."/>
            <person name="Xiong A."/>
            <person name="Li X."/>
            <person name="Fan H."/>
        </authorList>
    </citation>
    <scope>NUCLEOTIDE SEQUENCE [MRNA] OF 293-375</scope>
</reference>
<feature type="chain" id="PRO_0000064974" description="SAP-like protein BP-73">
    <location>
        <begin position="1"/>
        <end position="375"/>
    </location>
</feature>
<feature type="region of interest" description="Disordered" evidence="1">
    <location>
        <begin position="46"/>
        <end position="113"/>
    </location>
</feature>
<feature type="region of interest" description="Disordered" evidence="1">
    <location>
        <begin position="130"/>
        <end position="233"/>
    </location>
</feature>
<feature type="region of interest" description="Disordered" evidence="1">
    <location>
        <begin position="257"/>
        <end position="315"/>
    </location>
</feature>
<feature type="region of interest" description="Interaction with WAXY">
    <location>
        <begin position="338"/>
        <end position="375"/>
    </location>
</feature>
<feature type="compositionally biased region" description="Basic residues" evidence="1">
    <location>
        <begin position="59"/>
        <end position="70"/>
    </location>
</feature>
<feature type="compositionally biased region" description="Acidic residues" evidence="1">
    <location>
        <begin position="76"/>
        <end position="86"/>
    </location>
</feature>
<feature type="compositionally biased region" description="Polar residues" evidence="1">
    <location>
        <begin position="88"/>
        <end position="109"/>
    </location>
</feature>
<feature type="compositionally biased region" description="Basic and acidic residues" evidence="1">
    <location>
        <begin position="134"/>
        <end position="152"/>
    </location>
</feature>
<feature type="compositionally biased region" description="Basic and acidic residues" evidence="1">
    <location>
        <begin position="163"/>
        <end position="186"/>
    </location>
</feature>
<feature type="compositionally biased region" description="Polar residues" evidence="1">
    <location>
        <begin position="187"/>
        <end position="197"/>
    </location>
</feature>
<feature type="compositionally biased region" description="Acidic residues" evidence="1">
    <location>
        <begin position="295"/>
        <end position="311"/>
    </location>
</feature>
<feature type="sequence conflict" description="In Ref. 5; AAL86018." evidence="3" ref="5">
    <original>S</original>
    <variation>A</variation>
    <location>
        <position position="293"/>
    </location>
</feature>